<feature type="chain" id="PRO_1000011119" description="Phosphopantetheine adenylyltransferase">
    <location>
        <begin position="1"/>
        <end position="162"/>
    </location>
</feature>
<feature type="binding site" evidence="1">
    <location>
        <begin position="9"/>
        <end position="10"/>
    </location>
    <ligand>
        <name>ATP</name>
        <dbReference type="ChEBI" id="CHEBI:30616"/>
    </ligand>
</feature>
<feature type="binding site" evidence="1">
    <location>
        <position position="9"/>
    </location>
    <ligand>
        <name>substrate</name>
    </ligand>
</feature>
<feature type="binding site" evidence="1">
    <location>
        <position position="17"/>
    </location>
    <ligand>
        <name>ATP</name>
        <dbReference type="ChEBI" id="CHEBI:30616"/>
    </ligand>
</feature>
<feature type="binding site" evidence="1">
    <location>
        <position position="41"/>
    </location>
    <ligand>
        <name>substrate</name>
    </ligand>
</feature>
<feature type="binding site" evidence="1">
    <location>
        <position position="73"/>
    </location>
    <ligand>
        <name>substrate</name>
    </ligand>
</feature>
<feature type="binding site" evidence="1">
    <location>
        <position position="87"/>
    </location>
    <ligand>
        <name>substrate</name>
    </ligand>
</feature>
<feature type="binding site" evidence="1">
    <location>
        <begin position="88"/>
        <end position="90"/>
    </location>
    <ligand>
        <name>ATP</name>
        <dbReference type="ChEBI" id="CHEBI:30616"/>
    </ligand>
</feature>
<feature type="binding site" evidence="1">
    <location>
        <position position="98"/>
    </location>
    <ligand>
        <name>ATP</name>
        <dbReference type="ChEBI" id="CHEBI:30616"/>
    </ligand>
</feature>
<feature type="binding site" evidence="1">
    <location>
        <begin position="123"/>
        <end position="129"/>
    </location>
    <ligand>
        <name>ATP</name>
        <dbReference type="ChEBI" id="CHEBI:30616"/>
    </ligand>
</feature>
<feature type="site" description="Transition state stabilizer" evidence="1">
    <location>
        <position position="17"/>
    </location>
</feature>
<dbReference type="EC" id="2.7.7.3" evidence="1"/>
<dbReference type="EMBL" id="CP000141">
    <property type="protein sequence ID" value="ABB15709.1"/>
    <property type="molecule type" value="Genomic_DNA"/>
</dbReference>
<dbReference type="RefSeq" id="WP_011344366.1">
    <property type="nucleotide sequence ID" value="NC_007503.1"/>
</dbReference>
<dbReference type="SMR" id="Q3AC43"/>
<dbReference type="FunCoup" id="Q3AC43">
    <property type="interactions" value="418"/>
</dbReference>
<dbReference type="STRING" id="246194.CHY_1459"/>
<dbReference type="KEGG" id="chy:CHY_1459"/>
<dbReference type="eggNOG" id="COG0669">
    <property type="taxonomic scope" value="Bacteria"/>
</dbReference>
<dbReference type="HOGENOM" id="CLU_100149_0_1_9"/>
<dbReference type="InParanoid" id="Q3AC43"/>
<dbReference type="OrthoDB" id="9806661at2"/>
<dbReference type="UniPathway" id="UPA00241">
    <property type="reaction ID" value="UER00355"/>
</dbReference>
<dbReference type="Proteomes" id="UP000002706">
    <property type="component" value="Chromosome"/>
</dbReference>
<dbReference type="GO" id="GO:0005737">
    <property type="term" value="C:cytoplasm"/>
    <property type="evidence" value="ECO:0007669"/>
    <property type="project" value="UniProtKB-SubCell"/>
</dbReference>
<dbReference type="GO" id="GO:0005524">
    <property type="term" value="F:ATP binding"/>
    <property type="evidence" value="ECO:0007669"/>
    <property type="project" value="UniProtKB-KW"/>
</dbReference>
<dbReference type="GO" id="GO:0004595">
    <property type="term" value="F:pantetheine-phosphate adenylyltransferase activity"/>
    <property type="evidence" value="ECO:0007669"/>
    <property type="project" value="UniProtKB-UniRule"/>
</dbReference>
<dbReference type="GO" id="GO:0015937">
    <property type="term" value="P:coenzyme A biosynthetic process"/>
    <property type="evidence" value="ECO:0007669"/>
    <property type="project" value="UniProtKB-UniRule"/>
</dbReference>
<dbReference type="CDD" id="cd02163">
    <property type="entry name" value="PPAT"/>
    <property type="match status" value="1"/>
</dbReference>
<dbReference type="Gene3D" id="3.40.50.620">
    <property type="entry name" value="HUPs"/>
    <property type="match status" value="1"/>
</dbReference>
<dbReference type="HAMAP" id="MF_00151">
    <property type="entry name" value="PPAT_bact"/>
    <property type="match status" value="1"/>
</dbReference>
<dbReference type="InterPro" id="IPR004821">
    <property type="entry name" value="Cyt_trans-like"/>
</dbReference>
<dbReference type="InterPro" id="IPR001980">
    <property type="entry name" value="PPAT"/>
</dbReference>
<dbReference type="InterPro" id="IPR014729">
    <property type="entry name" value="Rossmann-like_a/b/a_fold"/>
</dbReference>
<dbReference type="NCBIfam" id="TIGR01510">
    <property type="entry name" value="coaD_prev_kdtB"/>
    <property type="match status" value="1"/>
</dbReference>
<dbReference type="NCBIfam" id="TIGR00125">
    <property type="entry name" value="cyt_tran_rel"/>
    <property type="match status" value="1"/>
</dbReference>
<dbReference type="PANTHER" id="PTHR21342">
    <property type="entry name" value="PHOSPHOPANTETHEINE ADENYLYLTRANSFERASE"/>
    <property type="match status" value="1"/>
</dbReference>
<dbReference type="PANTHER" id="PTHR21342:SF1">
    <property type="entry name" value="PHOSPHOPANTETHEINE ADENYLYLTRANSFERASE"/>
    <property type="match status" value="1"/>
</dbReference>
<dbReference type="Pfam" id="PF01467">
    <property type="entry name" value="CTP_transf_like"/>
    <property type="match status" value="1"/>
</dbReference>
<dbReference type="PRINTS" id="PR01020">
    <property type="entry name" value="LPSBIOSNTHSS"/>
</dbReference>
<dbReference type="SUPFAM" id="SSF52374">
    <property type="entry name" value="Nucleotidylyl transferase"/>
    <property type="match status" value="1"/>
</dbReference>
<proteinExistence type="inferred from homology"/>
<sequence>MRIAVYPGSFDPITNGHLDIIERAAELFDRLIVAIAKNPMKKPLFTLEERLDMLRETLKYYPNIEIDSFEGLTVNYLKAKNAQVIIRGLRAISDFENEFMMALTNKKLVPWVETIFLMTKAEYSFISSSAVKEVAMYGGCLKGLVPEYVELKLREKFQKEGC</sequence>
<accession>Q3AC43</accession>
<protein>
    <recommendedName>
        <fullName evidence="1">Phosphopantetheine adenylyltransferase</fullName>
        <ecNumber evidence="1">2.7.7.3</ecNumber>
    </recommendedName>
    <alternativeName>
        <fullName evidence="1">Dephospho-CoA pyrophosphorylase</fullName>
    </alternativeName>
    <alternativeName>
        <fullName evidence="1">Pantetheine-phosphate adenylyltransferase</fullName>
        <shortName evidence="1">PPAT</shortName>
    </alternativeName>
</protein>
<gene>
    <name evidence="1" type="primary">coaD</name>
    <name type="ordered locus">CHY_1459</name>
</gene>
<reference key="1">
    <citation type="journal article" date="2005" name="PLoS Genet.">
        <title>Life in hot carbon monoxide: the complete genome sequence of Carboxydothermus hydrogenoformans Z-2901.</title>
        <authorList>
            <person name="Wu M."/>
            <person name="Ren Q."/>
            <person name="Durkin A.S."/>
            <person name="Daugherty S.C."/>
            <person name="Brinkac L.M."/>
            <person name="Dodson R.J."/>
            <person name="Madupu R."/>
            <person name="Sullivan S.A."/>
            <person name="Kolonay J.F."/>
            <person name="Nelson W.C."/>
            <person name="Tallon L.J."/>
            <person name="Jones K.M."/>
            <person name="Ulrich L.E."/>
            <person name="Gonzalez J.M."/>
            <person name="Zhulin I.B."/>
            <person name="Robb F.T."/>
            <person name="Eisen J.A."/>
        </authorList>
    </citation>
    <scope>NUCLEOTIDE SEQUENCE [LARGE SCALE GENOMIC DNA]</scope>
    <source>
        <strain>ATCC BAA-161 / DSM 6008 / Z-2901</strain>
    </source>
</reference>
<organism>
    <name type="scientific">Carboxydothermus hydrogenoformans (strain ATCC BAA-161 / DSM 6008 / Z-2901)</name>
    <dbReference type="NCBI Taxonomy" id="246194"/>
    <lineage>
        <taxon>Bacteria</taxon>
        <taxon>Bacillati</taxon>
        <taxon>Bacillota</taxon>
        <taxon>Clostridia</taxon>
        <taxon>Thermoanaerobacterales</taxon>
        <taxon>Thermoanaerobacteraceae</taxon>
        <taxon>Carboxydothermus</taxon>
    </lineage>
</organism>
<comment type="function">
    <text evidence="1">Reversibly transfers an adenylyl group from ATP to 4'-phosphopantetheine, yielding dephospho-CoA (dPCoA) and pyrophosphate.</text>
</comment>
<comment type="catalytic activity">
    <reaction evidence="1">
        <text>(R)-4'-phosphopantetheine + ATP + H(+) = 3'-dephospho-CoA + diphosphate</text>
        <dbReference type="Rhea" id="RHEA:19801"/>
        <dbReference type="ChEBI" id="CHEBI:15378"/>
        <dbReference type="ChEBI" id="CHEBI:30616"/>
        <dbReference type="ChEBI" id="CHEBI:33019"/>
        <dbReference type="ChEBI" id="CHEBI:57328"/>
        <dbReference type="ChEBI" id="CHEBI:61723"/>
        <dbReference type="EC" id="2.7.7.3"/>
    </reaction>
</comment>
<comment type="cofactor">
    <cofactor evidence="1">
        <name>Mg(2+)</name>
        <dbReference type="ChEBI" id="CHEBI:18420"/>
    </cofactor>
</comment>
<comment type="pathway">
    <text evidence="1">Cofactor biosynthesis; coenzyme A biosynthesis; CoA from (R)-pantothenate: step 4/5.</text>
</comment>
<comment type="subunit">
    <text evidence="1">Homohexamer.</text>
</comment>
<comment type="subcellular location">
    <subcellularLocation>
        <location evidence="1">Cytoplasm</location>
    </subcellularLocation>
</comment>
<comment type="similarity">
    <text evidence="1">Belongs to the bacterial CoaD family.</text>
</comment>
<keyword id="KW-0067">ATP-binding</keyword>
<keyword id="KW-0173">Coenzyme A biosynthesis</keyword>
<keyword id="KW-0963">Cytoplasm</keyword>
<keyword id="KW-0460">Magnesium</keyword>
<keyword id="KW-0547">Nucleotide-binding</keyword>
<keyword id="KW-0548">Nucleotidyltransferase</keyword>
<keyword id="KW-1185">Reference proteome</keyword>
<keyword id="KW-0808">Transferase</keyword>
<name>COAD_CARHZ</name>
<evidence type="ECO:0000255" key="1">
    <source>
        <dbReference type="HAMAP-Rule" id="MF_00151"/>
    </source>
</evidence>